<keyword id="KW-1015">Disulfide bond</keyword>
<keyword id="KW-0325">Glycoprotein</keyword>
<keyword id="KW-1031">Host cell junction</keyword>
<keyword id="KW-1032">Host cell membrane</keyword>
<keyword id="KW-1039">Host endosome</keyword>
<keyword id="KW-1040">Host Golgi apparatus</keyword>
<keyword id="KW-1043">Host membrane</keyword>
<keyword id="KW-0472">Membrane</keyword>
<keyword id="KW-0732">Signal</keyword>
<keyword id="KW-0812">Transmembrane</keyword>
<keyword id="KW-1133">Transmembrane helix</keyword>
<keyword id="KW-0261">Viral envelope protein</keyword>
<keyword id="KW-0946">Virion</keyword>
<reference key="1">
    <citation type="journal article" date="1986" name="J. Virol.">
        <title>Use of lambda gt11 to isolate genes for two pseudorabies virus glycoproteins with homology to herpes simplex virus and varicella-zoster virus glycoproteins.</title>
        <authorList>
            <person name="Petrovskis E.A."/>
            <person name="Timmins J.G."/>
            <person name="Post L.E."/>
        </authorList>
    </citation>
    <scope>NUCLEOTIDE SEQUENCE [GENOMIC DNA]</scope>
</reference>
<protein>
    <recommendedName>
        <fullName>Envelope glycoprotein E</fullName>
        <shortName>gE</shortName>
    </recommendedName>
</protein>
<comment type="function">
    <text evidence="1">In epithelial cells, the heterodimer gE/gI is required for the cell-to-cell spread of the virus, by sorting nascent virions to cell junctions. Once the virus reaches the cell junctions, virus particles can spread to adjacent cells extremely rapidly through interactions with cellular receptors that accumulate at these junctions. Implicated in basolateral spread in polarized cells. In neuronal cells, gE/gI is essential for the anterograde spread of the infection throughout the host nervous system. Together with US9, the heterodimer gE/gI is involved in the sorting and transport of viral structural components toward axon tips (By similarity).</text>
</comment>
<comment type="subunit">
    <text evidence="1">Interacts with gI.</text>
</comment>
<comment type="subcellular location">
    <subcellularLocation>
        <location evidence="1">Virion membrane</location>
        <topology evidence="1">Single-pass type I membrane protein</topology>
    </subcellularLocation>
    <subcellularLocation>
        <location evidence="1">Host cell membrane</location>
        <topology evidence="1">Single-pass type I membrane protein</topology>
    </subcellularLocation>
    <subcellularLocation>
        <location evidence="1">Host cell junction</location>
    </subcellularLocation>
    <subcellularLocation>
        <location evidence="1">Host Golgi apparatus membrane</location>
        <topology evidence="1">Single-pass membrane protein</topology>
    </subcellularLocation>
    <subcellularLocation>
        <location evidence="1">Host endosome membrane</location>
        <topology evidence="1">Single-pass membrane protein</topology>
    </subcellularLocation>
    <text evidence="1">During virion morphogenesis, this protein probably accumulates in the endosomes and trans-Golgi where secondary envelopment occurs. It is probably transported to the cell surface from where it is endocytosed and directed to the trans-Golgi network (TGN), maybe through an interaction with PACS-1 sorting protein. The heterodimer gE/gI then redistributes to cell junctions to promote cell-cell spread later in the infection (By similarity).</text>
</comment>
<comment type="PTM">
    <text evidence="4">Phosphorylated within the acidic cluster. Phosphorylation determines whether endocytosed viral gE traffics to the trans-Golgi network or recycles to the cell membrane.</text>
</comment>
<comment type="similarity">
    <text evidence="4">Belongs to the alphaherpesvirinae glycoprotein E family.</text>
</comment>
<accession>P08354</accession>
<evidence type="ECO:0000250" key="1"/>
<evidence type="ECO:0000255" key="2"/>
<evidence type="ECO:0000256" key="3">
    <source>
        <dbReference type="SAM" id="MobiDB-lite"/>
    </source>
</evidence>
<evidence type="ECO:0000305" key="4"/>
<feature type="signal peptide" evidence="2">
    <location>
        <begin position="1"/>
        <end position="20"/>
    </location>
</feature>
<feature type="chain" id="PRO_0000038234" description="Envelope glycoprotein E">
    <location>
        <begin position="21"/>
        <end position="577"/>
    </location>
</feature>
<feature type="topological domain" description="Virion surface" evidence="2">
    <location>
        <begin position="21"/>
        <end position="428"/>
    </location>
</feature>
<feature type="transmembrane region" description="Helical" evidence="2">
    <location>
        <begin position="429"/>
        <end position="449"/>
    </location>
</feature>
<feature type="topological domain" description="Intravirion" evidence="2">
    <location>
        <begin position="450"/>
        <end position="577"/>
    </location>
</feature>
<feature type="region of interest" description="Interaction with gI" evidence="1">
    <location>
        <begin position="117"/>
        <end position="141"/>
    </location>
</feature>
<feature type="region of interest" description="Disordered" evidence="3">
    <location>
        <begin position="481"/>
        <end position="538"/>
    </location>
</feature>
<feature type="region of interest" description="Acidic" evidence="1">
    <location>
        <begin position="485"/>
        <end position="496"/>
    </location>
</feature>
<feature type="short sequence motif" description="Internalization motif" evidence="2">
    <location>
        <begin position="478"/>
        <end position="481"/>
    </location>
</feature>
<feature type="compositionally biased region" description="Acidic residues" evidence="3">
    <location>
        <begin position="488"/>
        <end position="497"/>
    </location>
</feature>
<feature type="compositionally biased region" description="Acidic residues" evidence="3">
    <location>
        <begin position="521"/>
        <end position="533"/>
    </location>
</feature>
<feature type="glycosylation site" description="N-linked (GlcNAc...) asparagine; by host" evidence="2">
    <location>
        <position position="87"/>
    </location>
</feature>
<feature type="glycosylation site" description="N-linked (GlcNAc...) asparagine; by host" evidence="2">
    <location>
        <position position="93"/>
    </location>
</feature>
<feature type="glycosylation site" description="N-linked (GlcNAc...) asparagine; by host" evidence="2">
    <location>
        <position position="185"/>
    </location>
</feature>
<feature type="glycosylation site" description="N-linked (GlcNAc...) asparagine; by host" evidence="2">
    <location>
        <position position="258"/>
    </location>
</feature>
<feature type="glycosylation site" description="N-linked (GlcNAc...) asparagine; by host" evidence="2">
    <location>
        <position position="343"/>
    </location>
</feature>
<feature type="disulfide bond" evidence="1">
    <location>
        <begin position="274"/>
        <end position="300"/>
    </location>
</feature>
<feature type="disulfide bond" evidence="1">
    <location>
        <begin position="283"/>
        <end position="292"/>
    </location>
</feature>
<feature type="disulfide bond" evidence="1">
    <location>
        <begin position="319"/>
        <end position="331"/>
    </location>
</feature>
<proteinExistence type="inferred from homology"/>
<dbReference type="EMBL" id="M14336">
    <property type="protein sequence ID" value="AAC35205.1"/>
    <property type="molecule type" value="Genomic_DNA"/>
</dbReference>
<dbReference type="PIR" id="B29012">
    <property type="entry name" value="VGBEGI"/>
</dbReference>
<dbReference type="SMR" id="P08354"/>
<dbReference type="GlyCosmos" id="P08354">
    <property type="glycosylation" value="5 sites, No reported glycans"/>
</dbReference>
<dbReference type="GO" id="GO:0044175">
    <property type="term" value="C:host cell endosome membrane"/>
    <property type="evidence" value="ECO:0007669"/>
    <property type="project" value="UniProtKB-SubCell"/>
</dbReference>
<dbReference type="GO" id="GO:0044178">
    <property type="term" value="C:host cell Golgi membrane"/>
    <property type="evidence" value="ECO:0007669"/>
    <property type="project" value="UniProtKB-SubCell"/>
</dbReference>
<dbReference type="GO" id="GO:0044156">
    <property type="term" value="C:host cell junction"/>
    <property type="evidence" value="ECO:0007669"/>
    <property type="project" value="UniProtKB-SubCell"/>
</dbReference>
<dbReference type="GO" id="GO:0016020">
    <property type="term" value="C:membrane"/>
    <property type="evidence" value="ECO:0007669"/>
    <property type="project" value="UniProtKB-KW"/>
</dbReference>
<dbReference type="GO" id="GO:0019031">
    <property type="term" value="C:viral envelope"/>
    <property type="evidence" value="ECO:0007669"/>
    <property type="project" value="UniProtKB-KW"/>
</dbReference>
<dbReference type="GO" id="GO:0055036">
    <property type="term" value="C:virion membrane"/>
    <property type="evidence" value="ECO:0007669"/>
    <property type="project" value="UniProtKB-SubCell"/>
</dbReference>
<dbReference type="Gene3D" id="2.60.40.10">
    <property type="entry name" value="Immunoglobulins"/>
    <property type="match status" value="1"/>
</dbReference>
<dbReference type="InterPro" id="IPR003404">
    <property type="entry name" value="Herpes_glycopE_Fc"/>
</dbReference>
<dbReference type="InterPro" id="IPR036179">
    <property type="entry name" value="Ig-like_dom_sf"/>
</dbReference>
<dbReference type="InterPro" id="IPR013783">
    <property type="entry name" value="Ig-like_fold"/>
</dbReference>
<dbReference type="Pfam" id="PF02480">
    <property type="entry name" value="Herpes_gE"/>
    <property type="match status" value="1"/>
</dbReference>
<dbReference type="SUPFAM" id="SSF48726">
    <property type="entry name" value="Immunoglobulin"/>
    <property type="match status" value="1"/>
</dbReference>
<organism>
    <name type="scientific">Suid herpesvirus 1 (strain Rice)</name>
    <name type="common">SuHV-1</name>
    <name type="synonym">Pseudorabies virus (strain Rice)</name>
    <dbReference type="NCBI Taxonomy" id="10350"/>
    <lineage>
        <taxon>Viruses</taxon>
        <taxon>Duplodnaviria</taxon>
        <taxon>Heunggongvirae</taxon>
        <taxon>Peploviricota</taxon>
        <taxon>Herviviricetes</taxon>
        <taxon>Herpesvirales</taxon>
        <taxon>Orthoherpesviridae</taxon>
        <taxon>Alphaherpesvirinae</taxon>
        <taxon>Varicellovirus</taxon>
        <taxon>Varicellovirus suidalpha1</taxon>
        <taxon>Suid herpesvirus 1</taxon>
    </lineage>
</organism>
<sequence length="577" mass="62326">MRPFLLRAAQLLALLALALSTEAPSLSAETTPGPVTEVPSPSAEVWDLSTEAGDDDLDGDLNGDDRRAGFGSALASLREAPPAHLVNVSEGANFTLDARGDGAVVAGIWTFLPVRGCDAVAVTMVCFETACHPDLVLGRACVPEAPERGIGDYLPPEVPRLQREPPIVTPERWSPHLTVRRATPNDTGLYTLHDASGPRAVFFVAVGDRPPAPLAPVGPARHEPRFHALGFHSQLFSPGDTFDLMPRVVSDMGDSRENFTATLDWYYARAPPRCLLYYVYEPCIYHPRAPECLRPVDPACSFTSPARAALVARRAYASCSPLLGDRWLTACPFDAFGEEVHTNATADESGLYVLVMTHNGHVATWDYTLVATAAEYVTVIKELTAPARAPGTPWGPGGGDDAIYVDGVTTPAPPARPWNPYGRTTPGRLFVLALGSFVMTCVVGGAVWLCVLCSRRRAASRPFRVPTRAGTRMLSPVYTSLPTHEDYYDGDDDDEEAGDARRRPSSPGGDSGYEGPYVSLDAEDEFSSDEDDGLYVRPEEAPRSGFDVWFRDPEKPEVTNGPNYGVTASRLLNARPA</sequence>
<name>GE_SUHVR</name>
<organismHost>
    <name type="scientific">Sus scrofa</name>
    <name type="common">Pig</name>
    <dbReference type="NCBI Taxonomy" id="9823"/>
</organismHost>
<gene>
    <name type="primary">gE</name>
</gene>